<keyword id="KW-0687">Ribonucleoprotein</keyword>
<keyword id="KW-0689">Ribosomal protein</keyword>
<keyword id="KW-0694">RNA-binding</keyword>
<keyword id="KW-0699">rRNA-binding</keyword>
<protein>
    <recommendedName>
        <fullName evidence="1">Small ribosomal subunit protein bS6</fullName>
    </recommendedName>
    <alternativeName>
        <fullName evidence="2">30S ribosomal protein S6</fullName>
    </alternativeName>
</protein>
<comment type="function">
    <text evidence="1">Binds together with bS18 to 16S ribosomal RNA.</text>
</comment>
<comment type="similarity">
    <text evidence="1">Belongs to the bacterial ribosomal protein bS6 family.</text>
</comment>
<gene>
    <name evidence="1" type="primary">rpsF</name>
    <name type="ordered locus">lin0037</name>
</gene>
<sequence>MARKYEIMYIIRPNIEEDEKKAVVERFDGILTENGAEIIESKEWGKRRLAYEINDYRDGFYHIVKLNADKADSINEFDRLAKISDDIVRHMVIKEEA</sequence>
<feature type="chain" id="PRO_0000176788" description="Small ribosomal subunit protein bS6">
    <location>
        <begin position="1"/>
        <end position="97"/>
    </location>
</feature>
<name>RS6_LISIN</name>
<accession>Q92FR6</accession>
<evidence type="ECO:0000255" key="1">
    <source>
        <dbReference type="HAMAP-Rule" id="MF_00360"/>
    </source>
</evidence>
<evidence type="ECO:0000305" key="2"/>
<dbReference type="EMBL" id="AL596163">
    <property type="protein sequence ID" value="CAC95270.1"/>
    <property type="molecule type" value="Genomic_DNA"/>
</dbReference>
<dbReference type="PIR" id="AF1437">
    <property type="entry name" value="AF1437"/>
</dbReference>
<dbReference type="RefSeq" id="WP_003718123.1">
    <property type="nucleotide sequence ID" value="NC_003212.1"/>
</dbReference>
<dbReference type="SMR" id="Q92FR6"/>
<dbReference type="STRING" id="272626.gene:17564348"/>
<dbReference type="GeneID" id="93233530"/>
<dbReference type="KEGG" id="lin:rpsF"/>
<dbReference type="eggNOG" id="COG0360">
    <property type="taxonomic scope" value="Bacteria"/>
</dbReference>
<dbReference type="HOGENOM" id="CLU_113441_5_3_9"/>
<dbReference type="OrthoDB" id="9812702at2"/>
<dbReference type="Proteomes" id="UP000002513">
    <property type="component" value="Chromosome"/>
</dbReference>
<dbReference type="GO" id="GO:0005737">
    <property type="term" value="C:cytoplasm"/>
    <property type="evidence" value="ECO:0007669"/>
    <property type="project" value="UniProtKB-ARBA"/>
</dbReference>
<dbReference type="GO" id="GO:1990904">
    <property type="term" value="C:ribonucleoprotein complex"/>
    <property type="evidence" value="ECO:0007669"/>
    <property type="project" value="UniProtKB-KW"/>
</dbReference>
<dbReference type="GO" id="GO:0005840">
    <property type="term" value="C:ribosome"/>
    <property type="evidence" value="ECO:0007669"/>
    <property type="project" value="UniProtKB-KW"/>
</dbReference>
<dbReference type="GO" id="GO:0070181">
    <property type="term" value="F:small ribosomal subunit rRNA binding"/>
    <property type="evidence" value="ECO:0007669"/>
    <property type="project" value="TreeGrafter"/>
</dbReference>
<dbReference type="GO" id="GO:0003735">
    <property type="term" value="F:structural constituent of ribosome"/>
    <property type="evidence" value="ECO:0007669"/>
    <property type="project" value="InterPro"/>
</dbReference>
<dbReference type="GO" id="GO:0006412">
    <property type="term" value="P:translation"/>
    <property type="evidence" value="ECO:0007669"/>
    <property type="project" value="UniProtKB-UniRule"/>
</dbReference>
<dbReference type="CDD" id="cd00473">
    <property type="entry name" value="bS6"/>
    <property type="match status" value="1"/>
</dbReference>
<dbReference type="FunFam" id="3.30.70.60:FF:000002">
    <property type="entry name" value="30S ribosomal protein S6"/>
    <property type="match status" value="1"/>
</dbReference>
<dbReference type="Gene3D" id="3.30.70.60">
    <property type="match status" value="1"/>
</dbReference>
<dbReference type="HAMAP" id="MF_00360">
    <property type="entry name" value="Ribosomal_bS6"/>
    <property type="match status" value="1"/>
</dbReference>
<dbReference type="InterPro" id="IPR000529">
    <property type="entry name" value="Ribosomal_bS6"/>
</dbReference>
<dbReference type="InterPro" id="IPR020815">
    <property type="entry name" value="Ribosomal_bS6_CS"/>
</dbReference>
<dbReference type="InterPro" id="IPR035980">
    <property type="entry name" value="Ribosomal_bS6_sf"/>
</dbReference>
<dbReference type="InterPro" id="IPR020814">
    <property type="entry name" value="Ribosomal_S6_plastid/chlpt"/>
</dbReference>
<dbReference type="InterPro" id="IPR014717">
    <property type="entry name" value="Transl_elong_EF1B/ribsomal_bS6"/>
</dbReference>
<dbReference type="NCBIfam" id="TIGR00166">
    <property type="entry name" value="S6"/>
    <property type="match status" value="1"/>
</dbReference>
<dbReference type="PANTHER" id="PTHR21011">
    <property type="entry name" value="MITOCHONDRIAL 28S RIBOSOMAL PROTEIN S6"/>
    <property type="match status" value="1"/>
</dbReference>
<dbReference type="PANTHER" id="PTHR21011:SF1">
    <property type="entry name" value="SMALL RIBOSOMAL SUBUNIT PROTEIN BS6M"/>
    <property type="match status" value="1"/>
</dbReference>
<dbReference type="Pfam" id="PF01250">
    <property type="entry name" value="Ribosomal_S6"/>
    <property type="match status" value="1"/>
</dbReference>
<dbReference type="SUPFAM" id="SSF54995">
    <property type="entry name" value="Ribosomal protein S6"/>
    <property type="match status" value="1"/>
</dbReference>
<dbReference type="PROSITE" id="PS01048">
    <property type="entry name" value="RIBOSOMAL_S6"/>
    <property type="match status" value="1"/>
</dbReference>
<reference key="1">
    <citation type="journal article" date="2001" name="Science">
        <title>Comparative genomics of Listeria species.</title>
        <authorList>
            <person name="Glaser P."/>
            <person name="Frangeul L."/>
            <person name="Buchrieser C."/>
            <person name="Rusniok C."/>
            <person name="Amend A."/>
            <person name="Baquero F."/>
            <person name="Berche P."/>
            <person name="Bloecker H."/>
            <person name="Brandt P."/>
            <person name="Chakraborty T."/>
            <person name="Charbit A."/>
            <person name="Chetouani F."/>
            <person name="Couve E."/>
            <person name="de Daruvar A."/>
            <person name="Dehoux P."/>
            <person name="Domann E."/>
            <person name="Dominguez-Bernal G."/>
            <person name="Duchaud E."/>
            <person name="Durant L."/>
            <person name="Dussurget O."/>
            <person name="Entian K.-D."/>
            <person name="Fsihi H."/>
            <person name="Garcia-del Portillo F."/>
            <person name="Garrido P."/>
            <person name="Gautier L."/>
            <person name="Goebel W."/>
            <person name="Gomez-Lopez N."/>
            <person name="Hain T."/>
            <person name="Hauf J."/>
            <person name="Jackson D."/>
            <person name="Jones L.-M."/>
            <person name="Kaerst U."/>
            <person name="Kreft J."/>
            <person name="Kuhn M."/>
            <person name="Kunst F."/>
            <person name="Kurapkat G."/>
            <person name="Madueno E."/>
            <person name="Maitournam A."/>
            <person name="Mata Vicente J."/>
            <person name="Ng E."/>
            <person name="Nedjari H."/>
            <person name="Nordsiek G."/>
            <person name="Novella S."/>
            <person name="de Pablos B."/>
            <person name="Perez-Diaz J.-C."/>
            <person name="Purcell R."/>
            <person name="Remmel B."/>
            <person name="Rose M."/>
            <person name="Schlueter T."/>
            <person name="Simoes N."/>
            <person name="Tierrez A."/>
            <person name="Vazquez-Boland J.-A."/>
            <person name="Voss H."/>
            <person name="Wehland J."/>
            <person name="Cossart P."/>
        </authorList>
    </citation>
    <scope>NUCLEOTIDE SEQUENCE [LARGE SCALE GENOMIC DNA]</scope>
    <source>
        <strain>ATCC BAA-680 / CLIP 11262</strain>
    </source>
</reference>
<organism>
    <name type="scientific">Listeria innocua serovar 6a (strain ATCC BAA-680 / CLIP 11262)</name>
    <dbReference type="NCBI Taxonomy" id="272626"/>
    <lineage>
        <taxon>Bacteria</taxon>
        <taxon>Bacillati</taxon>
        <taxon>Bacillota</taxon>
        <taxon>Bacilli</taxon>
        <taxon>Bacillales</taxon>
        <taxon>Listeriaceae</taxon>
        <taxon>Listeria</taxon>
    </lineage>
</organism>
<proteinExistence type="inferred from homology"/>